<feature type="chain" id="PRO_0000352177" description="Outer envelope protein 80, chloroplastic">
    <location>
        <begin position="1"/>
        <end position="158"/>
    </location>
</feature>
<feature type="non-consecutive residues" evidence="2">
    <location>
        <begin position="11"/>
        <end position="12"/>
    </location>
</feature>
<feature type="non-consecutive residues" evidence="2">
    <location>
        <begin position="30"/>
        <end position="31"/>
    </location>
</feature>
<feature type="non-consecutive residues" evidence="2">
    <location>
        <begin position="40"/>
        <end position="41"/>
    </location>
</feature>
<feature type="non-consecutive residues" evidence="2">
    <location>
        <begin position="57"/>
        <end position="58"/>
    </location>
</feature>
<feature type="non-consecutive residues" evidence="2">
    <location>
        <begin position="64"/>
        <end position="65"/>
    </location>
</feature>
<feature type="non-consecutive residues" evidence="2">
    <location>
        <begin position="84"/>
        <end position="85"/>
    </location>
</feature>
<feature type="non-consecutive residues" evidence="2">
    <location>
        <begin position="95"/>
        <end position="96"/>
    </location>
</feature>
<feature type="non-consecutive residues" evidence="2">
    <location>
        <begin position="114"/>
        <end position="115"/>
    </location>
</feature>
<feature type="non-consecutive residues" evidence="2">
    <location>
        <begin position="137"/>
        <end position="138"/>
    </location>
</feature>
<feature type="non-consecutive residues" evidence="2">
    <location>
        <begin position="149"/>
        <end position="150"/>
    </location>
</feature>
<dbReference type="TCDB" id="3.A.9.1.1">
    <property type="family name" value="the chloroplast envelope protein translocase (cept or tic-toc) family"/>
</dbReference>
<dbReference type="GO" id="GO:0009707">
    <property type="term" value="C:chloroplast outer membrane"/>
    <property type="evidence" value="ECO:0007669"/>
    <property type="project" value="UniProtKB-SubCell"/>
</dbReference>
<organism>
    <name type="scientific">Pisum sativum</name>
    <name type="common">Garden pea</name>
    <name type="synonym">Lathyrus oleraceus</name>
    <dbReference type="NCBI Taxonomy" id="3888"/>
    <lineage>
        <taxon>Eukaryota</taxon>
        <taxon>Viridiplantae</taxon>
        <taxon>Streptophyta</taxon>
        <taxon>Embryophyta</taxon>
        <taxon>Tracheophyta</taxon>
        <taxon>Spermatophyta</taxon>
        <taxon>Magnoliopsida</taxon>
        <taxon>eudicotyledons</taxon>
        <taxon>Gunneridae</taxon>
        <taxon>Pentapetalae</taxon>
        <taxon>rosids</taxon>
        <taxon>fabids</taxon>
        <taxon>Fabales</taxon>
        <taxon>Fabaceae</taxon>
        <taxon>Papilionoideae</taxon>
        <taxon>50 kb inversion clade</taxon>
        <taxon>NPAAA clade</taxon>
        <taxon>Hologalegina</taxon>
        <taxon>IRL clade</taxon>
        <taxon>Fabeae</taxon>
        <taxon>Pisum</taxon>
    </lineage>
</organism>
<reference key="1">
    <citation type="journal article" date="2002" name="EMBO Rep.">
        <title>A Toc75-like protein import channel is abundant in chloroplasts.</title>
        <authorList>
            <person name="Eckart K."/>
            <person name="Eichacker L."/>
            <person name="Sohrt K."/>
            <person name="Schleiff E."/>
            <person name="Heins L."/>
            <person name="Soll J."/>
        </authorList>
    </citation>
    <scope>PROTEIN SEQUENCE</scope>
    <scope>SUBCELLULAR LOCATION</scope>
    <source>
        <strain>cv. Golf</strain>
    </source>
</reference>
<gene>
    <name type="primary">OEP80</name>
</gene>
<sequence>VLISEVLVRNKLQVSEAEVNNISIRFLDRKSIVPQPAQTAVDLIVRGLIGSFAYSHRLNLSLERTPGTLVHGNQDGNSNLTIGRWSGTAGLIFQRYNSPLTASGNTHTETLLAKSATLELTDEQGLPVLSFAEVMQKCVNTHRSYVVGSVDSPLGPLR</sequence>
<comment type="subcellular location">
    <subcellularLocation>
        <location evidence="1">Plastid</location>
        <location evidence="1">Chloroplast outer membrane</location>
    </subcellularLocation>
</comment>
<comment type="miscellaneous">
    <text>Ile-22 determined by Edman degradation sequencing is replaced by Ser-22 in the peptide sequenced by mass spectrometry.</text>
</comment>
<comment type="similarity">
    <text evidence="2">Belongs to the OEP80 (TC 1.B.33.2) family.</text>
</comment>
<keyword id="KW-0150">Chloroplast</keyword>
<keyword id="KW-0903">Direct protein sequencing</keyword>
<keyword id="KW-0472">Membrane</keyword>
<keyword id="KW-0934">Plastid</keyword>
<keyword id="KW-1002">Plastid outer membrane</keyword>
<proteinExistence type="evidence at protein level"/>
<evidence type="ECO:0000269" key="1">
    <source>
    </source>
</evidence>
<evidence type="ECO:0000305" key="2"/>
<name>OEP80_PEA</name>
<protein>
    <recommendedName>
        <fullName>Outer envelope protein 80, chloroplastic</fullName>
    </recommendedName>
    <alternativeName>
        <fullName>Chloroplastic outer envelope protein of 80 kDa</fullName>
        <shortName>PsOEP80</shortName>
    </alternativeName>
</protein>
<accession>P0C891</accession>